<proteinExistence type="inferred from homology"/>
<reference key="1">
    <citation type="journal article" date="2003" name="Lancet">
        <title>Genome sequence of Vibrio parahaemolyticus: a pathogenic mechanism distinct from that of V. cholerae.</title>
        <authorList>
            <person name="Makino K."/>
            <person name="Oshima K."/>
            <person name="Kurokawa K."/>
            <person name="Yokoyama K."/>
            <person name="Uda T."/>
            <person name="Tagomori K."/>
            <person name="Iijima Y."/>
            <person name="Najima M."/>
            <person name="Nakano M."/>
            <person name="Yamashita A."/>
            <person name="Kubota Y."/>
            <person name="Kimura S."/>
            <person name="Yasunaga T."/>
            <person name="Honda T."/>
            <person name="Shinagawa H."/>
            <person name="Hattori M."/>
            <person name="Iida T."/>
        </authorList>
    </citation>
    <scope>NUCLEOTIDE SEQUENCE [LARGE SCALE GENOMIC DNA]</scope>
    <source>
        <strain>RIMD 2210633</strain>
    </source>
</reference>
<evidence type="ECO:0000255" key="1">
    <source>
        <dbReference type="HAMAP-Rule" id="MF_01845"/>
    </source>
</evidence>
<gene>
    <name type="ordered locus">VP2173</name>
</gene>
<feature type="chain" id="PRO_0000339867" description="UPF0597 protein VP2173">
    <location>
        <begin position="1"/>
        <end position="425"/>
    </location>
</feature>
<name>Y2173_VIBPA</name>
<accession>Q87MQ8</accession>
<organism>
    <name type="scientific">Vibrio parahaemolyticus serotype O3:K6 (strain RIMD 2210633)</name>
    <dbReference type="NCBI Taxonomy" id="223926"/>
    <lineage>
        <taxon>Bacteria</taxon>
        <taxon>Pseudomonadati</taxon>
        <taxon>Pseudomonadota</taxon>
        <taxon>Gammaproteobacteria</taxon>
        <taxon>Vibrionales</taxon>
        <taxon>Vibrionaceae</taxon>
        <taxon>Vibrio</taxon>
    </lineage>
</organism>
<dbReference type="EMBL" id="BA000031">
    <property type="protein sequence ID" value="BAC60436.1"/>
    <property type="molecule type" value="Genomic_DNA"/>
</dbReference>
<dbReference type="RefSeq" id="NP_798552.1">
    <property type="nucleotide sequence ID" value="NC_004603.1"/>
</dbReference>
<dbReference type="RefSeq" id="WP_005479508.1">
    <property type="nucleotide sequence ID" value="NC_004603.1"/>
</dbReference>
<dbReference type="SMR" id="Q87MQ8"/>
<dbReference type="GeneID" id="1189686"/>
<dbReference type="KEGG" id="vpa:VP2173"/>
<dbReference type="PATRIC" id="fig|223926.6.peg.2076"/>
<dbReference type="eggNOG" id="COG3681">
    <property type="taxonomic scope" value="Bacteria"/>
</dbReference>
<dbReference type="HOGENOM" id="CLU_051840_0_0_6"/>
<dbReference type="Proteomes" id="UP000002493">
    <property type="component" value="Chromosome 1"/>
</dbReference>
<dbReference type="GO" id="GO:0080146">
    <property type="term" value="F:L-cysteine desulfhydrase activity"/>
    <property type="evidence" value="ECO:0007669"/>
    <property type="project" value="TreeGrafter"/>
</dbReference>
<dbReference type="GO" id="GO:0019450">
    <property type="term" value="P:L-cysteine catabolic process to pyruvate"/>
    <property type="evidence" value="ECO:0007669"/>
    <property type="project" value="TreeGrafter"/>
</dbReference>
<dbReference type="HAMAP" id="MF_01845">
    <property type="entry name" value="UPF0597"/>
    <property type="match status" value="1"/>
</dbReference>
<dbReference type="InterPro" id="IPR005130">
    <property type="entry name" value="Ser_deHydtase-like_asu"/>
</dbReference>
<dbReference type="InterPro" id="IPR021144">
    <property type="entry name" value="UPF0597"/>
</dbReference>
<dbReference type="PANTHER" id="PTHR30501">
    <property type="entry name" value="UPF0597 PROTEIN YHAM"/>
    <property type="match status" value="1"/>
</dbReference>
<dbReference type="PANTHER" id="PTHR30501:SF2">
    <property type="entry name" value="UPF0597 PROTEIN YHAM"/>
    <property type="match status" value="1"/>
</dbReference>
<dbReference type="Pfam" id="PF03313">
    <property type="entry name" value="SDH_alpha"/>
    <property type="match status" value="1"/>
</dbReference>
<dbReference type="PIRSF" id="PIRSF006054">
    <property type="entry name" value="UCP006054"/>
    <property type="match status" value="1"/>
</dbReference>
<comment type="similarity">
    <text evidence="1">Belongs to the UPF0597 family.</text>
</comment>
<sequence>MNQQWTQYIQIIKQVVKPALGCTEPIAAAYAAAVARKELGTSDIDAIEVRVSDNLFKNSMGVFVPGTGKIGLKIAASVGALAGDPTAELEVLARINEQDVAAAQQLIDEERVTVARMDTQEFIYCSVTLTSGDDVVSVTISGGHTNIIQIMRNGDVIFDAPPQQRVATASVCEGVDISIKQIYEFATQAPFEEIKFILQAAELNTLLAQEGIDRGYGLEIGRTLKGNIEQGLLGNDLMSRIQMMTSAASDARMGGATLPAMSNFGSGNQGIAATMPVVVAAEVFQNDEEQLARALIMSHLGAIYIKSYYPPLSAFCGNTVTSAAASMALVYLAGGTFEQSCYAIQNVISDSSGMVCDGAKSSCAMKVCTSSTTAVRSYLMAMGNHSVKNQGIVGEEVEQTIRNVGSMVRFGMPYTDKSIIDIMSA</sequence>
<protein>
    <recommendedName>
        <fullName evidence="1">UPF0597 protein VP2173</fullName>
    </recommendedName>
</protein>